<sequence length="19" mass="2048">SGLQFAVLDGQGFIPFPRV</sequence>
<proteinExistence type="evidence at protein level"/>
<name>PVK2_STRNA</name>
<comment type="function">
    <text evidence="1">Mediates visceral muscle contractile activity (myotropic activity).</text>
</comment>
<comment type="subcellular location">
    <subcellularLocation>
        <location evidence="6">Secreted</location>
    </subcellularLocation>
</comment>
<comment type="similarity">
    <text evidence="2">Belongs to the periviscerokinin family.</text>
</comment>
<feature type="peptide" id="PRO_0000420755" description="CAPA-Periviscerokinin-2" evidence="3">
    <location>
        <begin position="1"/>
        <end position="19"/>
    </location>
</feature>
<feature type="modified residue" description="Valine amide" evidence="3">
    <location>
        <position position="19"/>
    </location>
</feature>
<reference evidence="5" key="1">
    <citation type="journal article" date="2012" name="Syst. Biol.">
        <title>Peptidomics-based phylogeny and biogeography of Mantophasmatodea (Hexapoda).</title>
        <authorList>
            <person name="Predel R."/>
            <person name="Neupert S."/>
            <person name="Huetteroth W."/>
            <person name="Kahnt J."/>
            <person name="Waidelich D."/>
            <person name="Roth S."/>
        </authorList>
    </citation>
    <scope>PROTEIN SEQUENCE</scope>
    <scope>AMIDATION AT VAL-19</scope>
    <source>
        <tissue evidence="3">Abdominal perisympathetic organs</tissue>
    </source>
</reference>
<organism>
    <name type="scientific">Striatophasma naukluftense</name>
    <name type="common">Gladiator</name>
    <name type="synonym">Heel-walker</name>
    <dbReference type="NCBI Taxonomy" id="1041429"/>
    <lineage>
        <taxon>Eukaryota</taxon>
        <taxon>Metazoa</taxon>
        <taxon>Ecdysozoa</taxon>
        <taxon>Arthropoda</taxon>
        <taxon>Hexapoda</taxon>
        <taxon>Insecta</taxon>
        <taxon>Pterygota</taxon>
        <taxon>Neoptera</taxon>
        <taxon>Polyneoptera</taxon>
        <taxon>Mantophasmatodea</taxon>
        <taxon>Austrophasmatidae</taxon>
        <taxon>Striatophasma</taxon>
    </lineage>
</organism>
<protein>
    <recommendedName>
        <fullName evidence="4">CAPA-Periviscerokinin-2</fullName>
        <shortName evidence="4">CAPA-PVK-2</shortName>
    </recommendedName>
</protein>
<dbReference type="GO" id="GO:0005576">
    <property type="term" value="C:extracellular region"/>
    <property type="evidence" value="ECO:0007669"/>
    <property type="project" value="UniProtKB-SubCell"/>
</dbReference>
<dbReference type="GO" id="GO:0007218">
    <property type="term" value="P:neuropeptide signaling pathway"/>
    <property type="evidence" value="ECO:0007669"/>
    <property type="project" value="UniProtKB-KW"/>
</dbReference>
<keyword id="KW-0027">Amidation</keyword>
<keyword id="KW-0903">Direct protein sequencing</keyword>
<keyword id="KW-0527">Neuropeptide</keyword>
<keyword id="KW-0964">Secreted</keyword>
<evidence type="ECO:0000250" key="1">
    <source>
        <dbReference type="UniProtKB" id="P83923"/>
    </source>
</evidence>
<evidence type="ECO:0000255" key="2"/>
<evidence type="ECO:0000269" key="3">
    <source>
    </source>
</evidence>
<evidence type="ECO:0000303" key="4">
    <source>
    </source>
</evidence>
<evidence type="ECO:0000305" key="5"/>
<evidence type="ECO:0000305" key="6">
    <source>
    </source>
</evidence>
<accession>B0M399</accession>